<feature type="chain" id="PRO_0000131406" description="Large ribosomal subunit protein uL18">
    <location>
        <begin position="1"/>
        <end position="202"/>
    </location>
</feature>
<gene>
    <name evidence="1" type="primary">rpl18</name>
    <name type="synonym">rplR</name>
    <name type="ordered locus">MK0030</name>
</gene>
<comment type="function">
    <text evidence="1">This is one of the proteins that bind and probably mediate the attachment of the 5S RNA into the large ribosomal subunit, where it forms part of the central protuberance.</text>
</comment>
<comment type="subunit">
    <text evidence="1">Part of the 50S ribosomal subunit. Contacts the 5S and 23S rRNAs.</text>
</comment>
<comment type="similarity">
    <text evidence="1">Belongs to the universal ribosomal protein uL18 family.</text>
</comment>
<organism>
    <name type="scientific">Methanopyrus kandleri (strain AV19 / DSM 6324 / JCM 9639 / NBRC 100938)</name>
    <dbReference type="NCBI Taxonomy" id="190192"/>
    <lineage>
        <taxon>Archaea</taxon>
        <taxon>Methanobacteriati</taxon>
        <taxon>Methanobacteriota</taxon>
        <taxon>Methanomada group</taxon>
        <taxon>Methanopyri</taxon>
        <taxon>Methanopyrales</taxon>
        <taxon>Methanopyraceae</taxon>
        <taxon>Methanopyrus</taxon>
    </lineage>
</organism>
<evidence type="ECO:0000255" key="1">
    <source>
        <dbReference type="HAMAP-Rule" id="MF_01337"/>
    </source>
</evidence>
<evidence type="ECO:0000305" key="2"/>
<proteinExistence type="inferred from homology"/>
<sequence>MIALATGPRYRVPFRRRREGKTNYYKRRELIKADAPRLVARKTLNHNIAQIVDFAPHGDVTLASAHSIELRNKFGWKGHCGNTPAAYLTGYLCGLRALERGIERAVIDIGLHRPVRGSRVFAMLKGALDAGMDIPHGEEVLPPEDRIRGEHIANLARQIKEEDPEEYERRFSKYLERGLKPEELPEHFEEVKSKIEEEFGGA</sequence>
<reference key="1">
    <citation type="journal article" date="2002" name="Proc. Natl. Acad. Sci. U.S.A.">
        <title>The complete genome of hyperthermophile Methanopyrus kandleri AV19 and monophyly of archaeal methanogens.</title>
        <authorList>
            <person name="Slesarev A.I."/>
            <person name="Mezhevaya K.V."/>
            <person name="Makarova K.S."/>
            <person name="Polushin N.N."/>
            <person name="Shcherbinina O.V."/>
            <person name="Shakhova V.V."/>
            <person name="Belova G.I."/>
            <person name="Aravind L."/>
            <person name="Natale D.A."/>
            <person name="Rogozin I.B."/>
            <person name="Tatusov R.L."/>
            <person name="Wolf Y.I."/>
            <person name="Stetter K.O."/>
            <person name="Malykh A.G."/>
            <person name="Koonin E.V."/>
            <person name="Kozyavkin S.A."/>
        </authorList>
    </citation>
    <scope>NUCLEOTIDE SEQUENCE [LARGE SCALE GENOMIC DNA]</scope>
    <source>
        <strain>AV19 / DSM 6324 / JCM 9639 / NBRC 100938</strain>
    </source>
</reference>
<keyword id="KW-1185">Reference proteome</keyword>
<keyword id="KW-0687">Ribonucleoprotein</keyword>
<keyword id="KW-0689">Ribosomal protein</keyword>
<keyword id="KW-0694">RNA-binding</keyword>
<keyword id="KW-0699">rRNA-binding</keyword>
<accession>Q8TZA5</accession>
<protein>
    <recommendedName>
        <fullName evidence="1">Large ribosomal subunit protein uL18</fullName>
    </recommendedName>
    <alternativeName>
        <fullName evidence="2">50S ribosomal protein L18</fullName>
    </alternativeName>
</protein>
<dbReference type="EMBL" id="AE009439">
    <property type="protein sequence ID" value="AAM01247.1"/>
    <property type="molecule type" value="Genomic_DNA"/>
</dbReference>
<dbReference type="SMR" id="Q8TZA5"/>
<dbReference type="FunCoup" id="Q8TZA5">
    <property type="interactions" value="171"/>
</dbReference>
<dbReference type="STRING" id="190192.MK0030"/>
<dbReference type="PaxDb" id="190192-MK0030"/>
<dbReference type="EnsemblBacteria" id="AAM01247">
    <property type="protein sequence ID" value="AAM01247"/>
    <property type="gene ID" value="MK0030"/>
</dbReference>
<dbReference type="KEGG" id="mka:MK0030"/>
<dbReference type="PATRIC" id="fig|190192.8.peg.30"/>
<dbReference type="HOGENOM" id="CLU_056222_2_0_2"/>
<dbReference type="InParanoid" id="Q8TZA5"/>
<dbReference type="Proteomes" id="UP000001826">
    <property type="component" value="Chromosome"/>
</dbReference>
<dbReference type="GO" id="GO:0022625">
    <property type="term" value="C:cytosolic large ribosomal subunit"/>
    <property type="evidence" value="ECO:0007669"/>
    <property type="project" value="TreeGrafter"/>
</dbReference>
<dbReference type="GO" id="GO:0008097">
    <property type="term" value="F:5S rRNA binding"/>
    <property type="evidence" value="ECO:0007669"/>
    <property type="project" value="InterPro"/>
</dbReference>
<dbReference type="GO" id="GO:0003735">
    <property type="term" value="F:structural constituent of ribosome"/>
    <property type="evidence" value="ECO:0007669"/>
    <property type="project" value="InterPro"/>
</dbReference>
<dbReference type="GO" id="GO:0000027">
    <property type="term" value="P:ribosomal large subunit assembly"/>
    <property type="evidence" value="ECO:0007669"/>
    <property type="project" value="TreeGrafter"/>
</dbReference>
<dbReference type="GO" id="GO:0006412">
    <property type="term" value="P:translation"/>
    <property type="evidence" value="ECO:0007669"/>
    <property type="project" value="UniProtKB-UniRule"/>
</dbReference>
<dbReference type="CDD" id="cd00432">
    <property type="entry name" value="Ribosomal_L18_L5e"/>
    <property type="match status" value="1"/>
</dbReference>
<dbReference type="Gene3D" id="3.30.420.100">
    <property type="match status" value="1"/>
</dbReference>
<dbReference type="HAMAP" id="MF_01337_A">
    <property type="entry name" value="Ribosomal_uL18_A"/>
    <property type="match status" value="1"/>
</dbReference>
<dbReference type="InterPro" id="IPR005485">
    <property type="entry name" value="Rbsml_uL18_euk"/>
</dbReference>
<dbReference type="NCBIfam" id="NF006342">
    <property type="entry name" value="PRK08569.1"/>
    <property type="match status" value="1"/>
</dbReference>
<dbReference type="PANTHER" id="PTHR23410:SF12">
    <property type="entry name" value="LARGE RIBOSOMAL SUBUNIT PROTEIN UL18"/>
    <property type="match status" value="1"/>
</dbReference>
<dbReference type="PANTHER" id="PTHR23410">
    <property type="entry name" value="RIBOSOMAL PROTEIN L5-RELATED"/>
    <property type="match status" value="1"/>
</dbReference>
<dbReference type="Pfam" id="PF17144">
    <property type="entry name" value="Ribosomal_L5e"/>
    <property type="match status" value="2"/>
</dbReference>
<dbReference type="SUPFAM" id="SSF53137">
    <property type="entry name" value="Translational machinery components"/>
    <property type="match status" value="1"/>
</dbReference>
<name>RL18_METKA</name>